<dbReference type="EMBL" id="AE002098">
    <property type="protein sequence ID" value="AAF62323.1"/>
    <property type="molecule type" value="Genomic_DNA"/>
</dbReference>
<dbReference type="RefSeq" id="NP_274002.1">
    <property type="nucleotide sequence ID" value="NC_003112.2"/>
</dbReference>
<dbReference type="PDB" id="4RDR">
    <property type="method" value="X-ray"/>
    <property type="resolution" value="2.47 A"/>
    <property type="chains" value="A=25-758"/>
</dbReference>
<dbReference type="PDB" id="4RDT">
    <property type="method" value="X-ray"/>
    <property type="resolution" value="3.20 A"/>
    <property type="chains" value="A/B=25-758"/>
</dbReference>
<dbReference type="PDB" id="4RVW">
    <property type="method" value="X-ray"/>
    <property type="resolution" value="4.48 A"/>
    <property type="chains" value="A=25-758"/>
</dbReference>
<dbReference type="PDBsum" id="4RDR"/>
<dbReference type="PDBsum" id="4RDT"/>
<dbReference type="PDBsum" id="4RVW"/>
<dbReference type="SMR" id="Q9JZN9"/>
<dbReference type="STRING" id="122586.NMB0964"/>
<dbReference type="TCDB" id="1.B.14.2.9">
    <property type="family name" value="the outer membrane receptor (omr) family"/>
</dbReference>
<dbReference type="PaxDb" id="122586-NMB0964"/>
<dbReference type="KEGG" id="nme:NMB0964"/>
<dbReference type="PATRIC" id="fig|122586.8.peg.1222"/>
<dbReference type="HOGENOM" id="CLU_008287_10_1_4"/>
<dbReference type="InParanoid" id="Q9JZN9"/>
<dbReference type="OrthoDB" id="9795928at2"/>
<dbReference type="EvolutionaryTrace" id="Q9JZN9"/>
<dbReference type="Proteomes" id="UP000000425">
    <property type="component" value="Chromosome"/>
</dbReference>
<dbReference type="GO" id="GO:0009279">
    <property type="term" value="C:cell outer membrane"/>
    <property type="evidence" value="ECO:0000318"/>
    <property type="project" value="GO_Central"/>
</dbReference>
<dbReference type="GO" id="GO:0046872">
    <property type="term" value="F:metal ion binding"/>
    <property type="evidence" value="ECO:0000269"/>
    <property type="project" value="DisProt"/>
</dbReference>
<dbReference type="GO" id="GO:0015344">
    <property type="term" value="F:siderophore uptake transmembrane transporter activity"/>
    <property type="evidence" value="ECO:0000318"/>
    <property type="project" value="GO_Central"/>
</dbReference>
<dbReference type="GO" id="GO:0044718">
    <property type="term" value="P:siderophore transmembrane transport"/>
    <property type="evidence" value="ECO:0000318"/>
    <property type="project" value="GO_Central"/>
</dbReference>
<dbReference type="Gene3D" id="2.40.170.20">
    <property type="entry name" value="TonB-dependent receptor, beta-barrel domain"/>
    <property type="match status" value="1"/>
</dbReference>
<dbReference type="Gene3D" id="2.170.130.10">
    <property type="entry name" value="TonB-dependent receptor, plug domain"/>
    <property type="match status" value="1"/>
</dbReference>
<dbReference type="InterPro" id="IPR012910">
    <property type="entry name" value="Plug_dom"/>
</dbReference>
<dbReference type="InterPro" id="IPR037066">
    <property type="entry name" value="Plug_dom_sf"/>
</dbReference>
<dbReference type="InterPro" id="IPR039426">
    <property type="entry name" value="TonB-dep_rcpt-like"/>
</dbReference>
<dbReference type="InterPro" id="IPR000531">
    <property type="entry name" value="TonB-dep_rcpt_b-brl"/>
</dbReference>
<dbReference type="InterPro" id="IPR036942">
    <property type="entry name" value="TonB_rcpt_b-brl_sf"/>
</dbReference>
<dbReference type="PANTHER" id="PTHR30069">
    <property type="entry name" value="TONB-DEPENDENT OUTER MEMBRANE RECEPTOR"/>
    <property type="match status" value="1"/>
</dbReference>
<dbReference type="PANTHER" id="PTHR30069:SF40">
    <property type="entry name" value="TONB-DEPENDENT RECEPTOR NMB0964-RELATED"/>
    <property type="match status" value="1"/>
</dbReference>
<dbReference type="Pfam" id="PF07715">
    <property type="entry name" value="Plug"/>
    <property type="match status" value="1"/>
</dbReference>
<dbReference type="Pfam" id="PF00593">
    <property type="entry name" value="TonB_dep_Rec_b-barrel"/>
    <property type="match status" value="1"/>
</dbReference>
<dbReference type="SUPFAM" id="SSF56935">
    <property type="entry name" value="Porins"/>
    <property type="match status" value="1"/>
</dbReference>
<dbReference type="PROSITE" id="PS00430">
    <property type="entry name" value="TONB_DEPENDENT_REC_1"/>
    <property type="match status" value="1"/>
</dbReference>
<dbReference type="PROSITE" id="PS52016">
    <property type="entry name" value="TONB_DEPENDENT_REC_3"/>
    <property type="match status" value="1"/>
</dbReference>
<evidence type="ECO:0000250" key="1"/>
<evidence type="ECO:0000255" key="2"/>
<evidence type="ECO:0000255" key="3">
    <source>
        <dbReference type="PROSITE-ProRule" id="PRU01360"/>
    </source>
</evidence>
<evidence type="ECO:0000305" key="4"/>
<evidence type="ECO:0007829" key="5">
    <source>
        <dbReference type="PDB" id="4RDR"/>
    </source>
</evidence>
<evidence type="ECO:0007829" key="6">
    <source>
        <dbReference type="PDB" id="4RDT"/>
    </source>
</evidence>
<keyword id="KW-0002">3D-structure</keyword>
<keyword id="KW-0998">Cell outer membrane</keyword>
<keyword id="KW-0472">Membrane</keyword>
<keyword id="KW-0675">Receptor</keyword>
<keyword id="KW-1185">Reference proteome</keyword>
<keyword id="KW-0732">Signal</keyword>
<keyword id="KW-0798">TonB box</keyword>
<keyword id="KW-0812">Transmembrane</keyword>
<keyword id="KW-1134">Transmembrane beta strand</keyword>
<keyword id="KW-0813">Transport</keyword>
<gene>
    <name type="ordered locus">NMB0964</name>
</gene>
<proteinExistence type="evidence at protein level"/>
<accession>Q9JZN9</accession>
<comment type="function">
    <text evidence="1">Probable receptor, TonB-dependent.</text>
</comment>
<comment type="subcellular location">
    <subcellularLocation>
        <location evidence="3 4">Cell outer membrane</location>
        <topology evidence="3">Multi-pass membrane protein</topology>
    </subcellularLocation>
</comment>
<comment type="miscellaneous">
    <text>Present in outer membrane vesicle formulations which are used as vaccines in human.</text>
</comment>
<comment type="similarity">
    <text evidence="4">Belongs to the TonB-dependent receptor family.</text>
</comment>
<protein>
    <recommendedName>
        <fullName>Probable TonB-dependent receptor NMB0964</fullName>
    </recommendedName>
</protein>
<organism>
    <name type="scientific">Neisseria meningitidis serogroup B (strain ATCC BAA-335 / MC58)</name>
    <dbReference type="NCBI Taxonomy" id="122586"/>
    <lineage>
        <taxon>Bacteria</taxon>
        <taxon>Pseudomonadati</taxon>
        <taxon>Pseudomonadota</taxon>
        <taxon>Betaproteobacteria</taxon>
        <taxon>Neisseriales</taxon>
        <taxon>Neisseriaceae</taxon>
        <taxon>Neisseria</taxon>
    </lineage>
</organism>
<sequence>MAQTTLKPIVLSILLINTPLLAQAHETEQSVDLETVSVVGKSRPRATSGLLHTSTASDKIISGDTLRQKAVNLGDALDGVPGIHASQYGGGASAPVIRGQTGRRIKVLNHHGETGDMADFSPDHAIMVDTALSQQVEILRGPVTLLYSSGNVAGLVDVADGKIPEKMPENGVSGELGLRLSSGNLEKLTSGGINIGLGKNFVLHTEGLYRKSGDYAVPRYRNLKRLPDSHADSQTGSIGLSWVGEKGFIGVAYSDRRDQYGLPAHSHEYDDCHADIIWQKSLINKRYLQLYPHLLTEEDIDYDNPGLSCGFHDDDNAHAHTHSGRPWIDLRNKRYELRAEWKQPFPGFEALRVHLNRNDYRHDEKAGDAVENFFNNQTQNARIELRHQPIGRLKGSWGVQYLQQKSSALSAISEAVKQPMLLDNKVQHYSFFGVEQANWDNFTLEGGVRVEKQKASIQYDKALIDRENYYNHPLPDLGAHRQTARSFALSGNWYFTPQHKLSLTASHQERLPSTQELYAHGKHVATNTFEVGNKHLNKERSNNIELALGYEGDRWQYNLALYRNRFGNYIYAQTLNDGRGPKSIEDDSEMKLVRYNQSGADFYGAEGEIYFKPTPRYRIGVSGDYVRGRLKNLPSLPGREDAYGNRPFIAQDDQNAPRVPAARLGFHLKASLTDRIDANLDYYRVFAQNKLARYETRTPGHHMLNLGANYRRNTRYGEWNWYVKADNLLNQSVYAHSSFLSDTPQMGRSFTGGVNVKF</sequence>
<reference key="1">
    <citation type="journal article" date="2000" name="Science">
        <title>Complete genome sequence of Neisseria meningitidis serogroup B strain MC58.</title>
        <authorList>
            <person name="Tettelin H."/>
            <person name="Saunders N.J."/>
            <person name="Heidelberg J.F."/>
            <person name="Jeffries A.C."/>
            <person name="Nelson K.E."/>
            <person name="Eisen J.A."/>
            <person name="Ketchum K.A."/>
            <person name="Hood D.W."/>
            <person name="Peden J.F."/>
            <person name="Dodson R.J."/>
            <person name="Nelson W.C."/>
            <person name="Gwinn M.L."/>
            <person name="DeBoy R.T."/>
            <person name="Peterson J.D."/>
            <person name="Hickey E.K."/>
            <person name="Haft D.H."/>
            <person name="Salzberg S.L."/>
            <person name="White O."/>
            <person name="Fleischmann R.D."/>
            <person name="Dougherty B.A."/>
            <person name="Mason T.M."/>
            <person name="Ciecko A."/>
            <person name="Parksey D.S."/>
            <person name="Blair E."/>
            <person name="Cittone H."/>
            <person name="Clark E.B."/>
            <person name="Cotton M.D."/>
            <person name="Utterback T.R."/>
            <person name="Khouri H.M."/>
            <person name="Qin H."/>
            <person name="Vamathevan J.J."/>
            <person name="Gill J."/>
            <person name="Scarlato V."/>
            <person name="Masignani V."/>
            <person name="Pizza M."/>
            <person name="Grandi G."/>
            <person name="Sun L."/>
            <person name="Smith H.O."/>
            <person name="Fraser C.M."/>
            <person name="Moxon E.R."/>
            <person name="Rappuoli R."/>
            <person name="Venter J.C."/>
        </authorList>
    </citation>
    <scope>NUCLEOTIDE SEQUENCE [LARGE SCALE GENOMIC DNA]</scope>
    <source>
        <strain>ATCC BAA-335 / MC58</strain>
    </source>
</reference>
<reference key="2">
    <citation type="journal article" date="2005" name="Hum. Vaccin.">
        <title>Characterization of the protein content of a meningococcal outer membrane vesicle vaccine by polyacrylamide gel electrophoresis and mass spectrometry.</title>
        <authorList>
            <person name="Vipond C."/>
            <person name="Wheeler J.X."/>
            <person name="Jones C."/>
            <person name="Feavers I.M."/>
            <person name="Suker J."/>
        </authorList>
    </citation>
    <scope>IDENTIFICATION BY MASS SPECTROMETRY [LARGE SCALE ANALYSIS]</scope>
</reference>
<reference key="3">
    <citation type="journal article" date="2006" name="Proteomics">
        <title>Proteomic analysis of a meningococcal outer membrane vesicle vaccine prepared from the group B strain NZ98/254.</title>
        <authorList>
            <person name="Vipond C."/>
            <person name="Suker J."/>
            <person name="Jones C."/>
            <person name="Tang C."/>
            <person name="Feavers I.M."/>
            <person name="Wheeler J.X."/>
        </authorList>
    </citation>
    <scope>IDENTIFICATION BY MASS SPECTROMETRY [LARGE SCALE ANALYSIS]</scope>
    <source>
        <strain>NZ98/254 / Serogroup B</strain>
    </source>
</reference>
<name>Y964_NEIMB</name>
<feature type="signal peptide" evidence="2">
    <location>
        <begin position="1"/>
        <end position="24"/>
    </location>
</feature>
<feature type="chain" id="PRO_0000349888" description="Probable TonB-dependent receptor NMB0964">
    <location>
        <begin position="25"/>
        <end position="758"/>
    </location>
</feature>
<feature type="domain" description="TBDR plug" evidence="3">
    <location>
        <begin position="50"/>
        <end position="161"/>
    </location>
</feature>
<feature type="domain" description="TBDR beta-barrel" evidence="3">
    <location>
        <begin position="171"/>
        <end position="758"/>
    </location>
</feature>
<feature type="short sequence motif" description="TonB C-terminal box">
    <location>
        <begin position="741"/>
        <end position="758"/>
    </location>
</feature>
<feature type="strand" evidence="5">
    <location>
        <begin position="59"/>
        <end position="62"/>
    </location>
</feature>
<feature type="helix" evidence="5">
    <location>
        <begin position="63"/>
        <end position="66"/>
    </location>
</feature>
<feature type="helix" evidence="5">
    <location>
        <begin position="73"/>
        <end position="77"/>
    </location>
</feature>
<feature type="strand" evidence="5">
    <location>
        <begin position="83"/>
        <end position="88"/>
    </location>
</feature>
<feature type="turn" evidence="5">
    <location>
        <begin position="89"/>
        <end position="91"/>
    </location>
</feature>
<feature type="strand" evidence="5">
    <location>
        <begin position="92"/>
        <end position="97"/>
    </location>
</feature>
<feature type="helix" evidence="5">
    <location>
        <begin position="102"/>
        <end position="104"/>
    </location>
</feature>
<feature type="strand" evidence="5">
    <location>
        <begin position="105"/>
        <end position="109"/>
    </location>
</feature>
<feature type="turn" evidence="5">
    <location>
        <begin position="118"/>
        <end position="120"/>
    </location>
</feature>
<feature type="helix" evidence="5">
    <location>
        <begin position="130"/>
        <end position="132"/>
    </location>
</feature>
<feature type="strand" evidence="5">
    <location>
        <begin position="133"/>
        <end position="139"/>
    </location>
</feature>
<feature type="helix" evidence="5">
    <location>
        <begin position="142"/>
        <end position="146"/>
    </location>
</feature>
<feature type="strand" evidence="5">
    <location>
        <begin position="155"/>
        <end position="163"/>
    </location>
</feature>
<feature type="helix" evidence="5">
    <location>
        <begin position="169"/>
        <end position="171"/>
    </location>
</feature>
<feature type="strand" evidence="5">
    <location>
        <begin position="172"/>
        <end position="181"/>
    </location>
</feature>
<feature type="turn" evidence="5">
    <location>
        <begin position="182"/>
        <end position="184"/>
    </location>
</feature>
<feature type="strand" evidence="5">
    <location>
        <begin position="187"/>
        <end position="196"/>
    </location>
</feature>
<feature type="strand" evidence="5">
    <location>
        <begin position="198"/>
        <end position="212"/>
    </location>
</feature>
<feature type="strand" evidence="6">
    <location>
        <begin position="214"/>
        <end position="216"/>
    </location>
</feature>
<feature type="strand" evidence="6">
    <location>
        <begin position="218"/>
        <end position="220"/>
    </location>
</feature>
<feature type="strand" evidence="6">
    <location>
        <begin position="224"/>
        <end position="226"/>
    </location>
</feature>
<feature type="strand" evidence="5">
    <location>
        <begin position="231"/>
        <end position="242"/>
    </location>
</feature>
<feature type="strand" evidence="5">
    <location>
        <begin position="245"/>
        <end position="261"/>
    </location>
</feature>
<feature type="turn" evidence="5">
    <location>
        <begin position="268"/>
        <end position="271"/>
    </location>
</feature>
<feature type="strand" evidence="5">
    <location>
        <begin position="272"/>
        <end position="275"/>
    </location>
</feature>
<feature type="helix" evidence="5">
    <location>
        <begin position="279"/>
        <end position="284"/>
    </location>
</feature>
<feature type="helix" evidence="5">
    <location>
        <begin position="287"/>
        <end position="290"/>
    </location>
</feature>
<feature type="helix" evidence="5">
    <location>
        <begin position="292"/>
        <end position="294"/>
    </location>
</feature>
<feature type="helix" evidence="5">
    <location>
        <begin position="297"/>
        <end position="299"/>
    </location>
</feature>
<feature type="turn" evidence="6">
    <location>
        <begin position="300"/>
        <end position="302"/>
    </location>
</feature>
<feature type="strand" evidence="5">
    <location>
        <begin position="306"/>
        <end position="309"/>
    </location>
</feature>
<feature type="strand" evidence="5">
    <location>
        <begin position="326"/>
        <end position="342"/>
    </location>
</feature>
<feature type="strand" evidence="5">
    <location>
        <begin position="348"/>
        <end position="366"/>
    </location>
</feature>
<feature type="strand" evidence="5">
    <location>
        <begin position="369"/>
        <end position="387"/>
    </location>
</feature>
<feature type="strand" evidence="5">
    <location>
        <begin position="390"/>
        <end position="410"/>
    </location>
</feature>
<feature type="turn" evidence="6">
    <location>
        <begin position="414"/>
        <end position="416"/>
    </location>
</feature>
<feature type="strand" evidence="5">
    <location>
        <begin position="420"/>
        <end position="439"/>
    </location>
</feature>
<feature type="strand" evidence="5">
    <location>
        <begin position="442"/>
        <end position="456"/>
    </location>
</feature>
<feature type="helix" evidence="5">
    <location>
        <begin position="461"/>
        <end position="468"/>
    </location>
</feature>
<feature type="strand" evidence="5">
    <location>
        <begin position="480"/>
        <end position="494"/>
    </location>
</feature>
<feature type="strand" evidence="5">
    <location>
        <begin position="496"/>
        <end position="510"/>
    </location>
</feature>
<feature type="helix" evidence="5">
    <location>
        <begin position="514"/>
        <end position="518"/>
    </location>
</feature>
<feature type="strand" evidence="5">
    <location>
        <begin position="520"/>
        <end position="523"/>
    </location>
</feature>
<feature type="helix" evidence="5">
    <location>
        <begin position="524"/>
        <end position="526"/>
    </location>
</feature>
<feature type="strand" evidence="5">
    <location>
        <begin position="528"/>
        <end position="531"/>
    </location>
</feature>
<feature type="strand" evidence="5">
    <location>
        <begin position="539"/>
        <end position="552"/>
    </location>
</feature>
<feature type="strand" evidence="5">
    <location>
        <begin position="555"/>
        <end position="574"/>
    </location>
</feature>
<feature type="strand" evidence="5">
    <location>
        <begin position="576"/>
        <end position="580"/>
    </location>
</feature>
<feature type="strand" evidence="5">
    <location>
        <begin position="591"/>
        <end position="614"/>
    </location>
</feature>
<feature type="strand" evidence="5">
    <location>
        <begin position="617"/>
        <end position="632"/>
    </location>
</feature>
<feature type="strand" evidence="5">
    <location>
        <begin position="663"/>
        <end position="673"/>
    </location>
</feature>
<feature type="strand" evidence="5">
    <location>
        <begin position="676"/>
        <end position="685"/>
    </location>
</feature>
<feature type="strand" evidence="5">
    <location>
        <begin position="701"/>
        <end position="713"/>
    </location>
</feature>
<feature type="strand" evidence="5">
    <location>
        <begin position="715"/>
        <end position="726"/>
    </location>
</feature>
<feature type="turn" evidence="5">
    <location>
        <begin position="739"/>
        <end position="742"/>
    </location>
</feature>
<feature type="strand" evidence="5">
    <location>
        <begin position="749"/>
        <end position="758"/>
    </location>
</feature>